<proteinExistence type="inferred from homology"/>
<feature type="chain" id="PRO_0000214734" description="Sulfurtransferase TusD">
    <location>
        <begin position="1"/>
        <end position="128"/>
    </location>
</feature>
<feature type="active site" description="Cysteine persulfide intermediate" evidence="1">
    <location>
        <position position="78"/>
    </location>
</feature>
<organism>
    <name type="scientific">Salmonella typhimurium (strain LT2 / SGSC1412 / ATCC 700720)</name>
    <dbReference type="NCBI Taxonomy" id="99287"/>
    <lineage>
        <taxon>Bacteria</taxon>
        <taxon>Pseudomonadati</taxon>
        <taxon>Pseudomonadota</taxon>
        <taxon>Gammaproteobacteria</taxon>
        <taxon>Enterobacterales</taxon>
        <taxon>Enterobacteriaceae</taxon>
        <taxon>Salmonella</taxon>
    </lineage>
</organism>
<accession>Q8ZLL7</accession>
<name>TUSD_SALTY</name>
<sequence>MRYAIMVTGPAYGTQQASSALQFAHALLNEGHELASVFFYREGVYNANLLTSPASDEYDLVRAWQKLNTQHGVALNICVAAALRRGIIDETEAGRLALPSANLQPGFTLSGLGALAEASLTCDRVVQF</sequence>
<reference key="1">
    <citation type="journal article" date="2001" name="Nature">
        <title>Complete genome sequence of Salmonella enterica serovar Typhimurium LT2.</title>
        <authorList>
            <person name="McClelland M."/>
            <person name="Sanderson K.E."/>
            <person name="Spieth J."/>
            <person name="Clifton S.W."/>
            <person name="Latreille P."/>
            <person name="Courtney L."/>
            <person name="Porwollik S."/>
            <person name="Ali J."/>
            <person name="Dante M."/>
            <person name="Du F."/>
            <person name="Hou S."/>
            <person name="Layman D."/>
            <person name="Leonard S."/>
            <person name="Nguyen C."/>
            <person name="Scott K."/>
            <person name="Holmes A."/>
            <person name="Grewal N."/>
            <person name="Mulvaney E."/>
            <person name="Ryan E."/>
            <person name="Sun H."/>
            <person name="Florea L."/>
            <person name="Miller W."/>
            <person name="Stoneking T."/>
            <person name="Nhan M."/>
            <person name="Waterston R."/>
            <person name="Wilson R.K."/>
        </authorList>
    </citation>
    <scope>NUCLEOTIDE SEQUENCE [LARGE SCALE GENOMIC DNA]</scope>
    <source>
        <strain>LT2 / SGSC1412 / ATCC 700720</strain>
    </source>
</reference>
<evidence type="ECO:0000255" key="1">
    <source>
        <dbReference type="HAMAP-Rule" id="MF_00390"/>
    </source>
</evidence>
<comment type="function">
    <text evidence="1">Part of a sulfur-relay system required for 2-thiolation of 5-methylaminomethyl-2-thiouridine (mnm(5)s(2)U) at tRNA wobble positions. Accepts sulfur from TusA and transfers it in turn to TusE.</text>
</comment>
<comment type="subunit">
    <text evidence="1">Heterohexamer, formed by a dimer of trimers. The hexameric TusBCD complex contains 2 copies each of TusB, TusC and TusD. The TusBCD complex interacts with TusE.</text>
</comment>
<comment type="subcellular location">
    <subcellularLocation>
        <location evidence="1">Cytoplasm</location>
    </subcellularLocation>
</comment>
<comment type="similarity">
    <text evidence="1">Belongs to the DsrE/TusD family.</text>
</comment>
<gene>
    <name evidence="1" type="primary">tusD</name>
    <name type="ordered locus">STM3451</name>
</gene>
<dbReference type="EC" id="2.8.1.-" evidence="1"/>
<dbReference type="EMBL" id="AE006468">
    <property type="protein sequence ID" value="AAL22314.1"/>
    <property type="molecule type" value="Genomic_DNA"/>
</dbReference>
<dbReference type="RefSeq" id="WP_001268010.1">
    <property type="nucleotide sequence ID" value="NC_003197.2"/>
</dbReference>
<dbReference type="SMR" id="Q8ZLL7"/>
<dbReference type="STRING" id="99287.STM3451"/>
<dbReference type="PaxDb" id="99287-STM3451"/>
<dbReference type="KEGG" id="stm:STM3451"/>
<dbReference type="PATRIC" id="fig|99287.12.peg.3648"/>
<dbReference type="HOGENOM" id="CLU_132095_0_0_6"/>
<dbReference type="OMA" id="PYNHQAS"/>
<dbReference type="PhylomeDB" id="Q8ZLL7"/>
<dbReference type="BioCyc" id="SENT99287:STM3451-MONOMER"/>
<dbReference type="Proteomes" id="UP000001014">
    <property type="component" value="Chromosome"/>
</dbReference>
<dbReference type="GO" id="GO:0005829">
    <property type="term" value="C:cytosol"/>
    <property type="evidence" value="ECO:0000318"/>
    <property type="project" value="GO_Central"/>
</dbReference>
<dbReference type="GO" id="GO:1990228">
    <property type="term" value="C:sulfurtransferase complex"/>
    <property type="evidence" value="ECO:0000318"/>
    <property type="project" value="GO_Central"/>
</dbReference>
<dbReference type="GO" id="GO:0097163">
    <property type="term" value="F:sulfur carrier activity"/>
    <property type="evidence" value="ECO:0000318"/>
    <property type="project" value="GO_Central"/>
</dbReference>
<dbReference type="GO" id="GO:0016783">
    <property type="term" value="F:sulfurtransferase activity"/>
    <property type="evidence" value="ECO:0007669"/>
    <property type="project" value="UniProtKB-UniRule"/>
</dbReference>
<dbReference type="GO" id="GO:0002143">
    <property type="term" value="P:tRNA wobble position uridine thiolation"/>
    <property type="evidence" value="ECO:0000318"/>
    <property type="project" value="GO_Central"/>
</dbReference>
<dbReference type="FunFam" id="3.40.1260.10:FF:000001">
    <property type="entry name" value="Sulfurtransferase TusD"/>
    <property type="match status" value="1"/>
</dbReference>
<dbReference type="Gene3D" id="3.40.1260.10">
    <property type="entry name" value="DsrEFH-like"/>
    <property type="match status" value="1"/>
</dbReference>
<dbReference type="HAMAP" id="MF_00390">
    <property type="entry name" value="Thiourid_synth_D"/>
    <property type="match status" value="1"/>
</dbReference>
<dbReference type="InterPro" id="IPR027396">
    <property type="entry name" value="DsrEFH-like"/>
</dbReference>
<dbReference type="InterPro" id="IPR003787">
    <property type="entry name" value="Sulphur_relay_DsrE/F-like"/>
</dbReference>
<dbReference type="InterPro" id="IPR017463">
    <property type="entry name" value="Sulphur_relay_TusD/DsrE"/>
</dbReference>
<dbReference type="NCBIfam" id="NF001237">
    <property type="entry name" value="PRK00207.1"/>
    <property type="match status" value="1"/>
</dbReference>
<dbReference type="NCBIfam" id="TIGR03012">
    <property type="entry name" value="sulf_tusD_dsrE"/>
    <property type="match status" value="1"/>
</dbReference>
<dbReference type="PANTHER" id="PTHR34874">
    <property type="entry name" value="PROTEIN YCHN"/>
    <property type="match status" value="1"/>
</dbReference>
<dbReference type="PANTHER" id="PTHR34874:SF3">
    <property type="entry name" value="SULFURTRANSFERASE TUSD"/>
    <property type="match status" value="1"/>
</dbReference>
<dbReference type="Pfam" id="PF02635">
    <property type="entry name" value="DsrE"/>
    <property type="match status" value="1"/>
</dbReference>
<dbReference type="SUPFAM" id="SSF75169">
    <property type="entry name" value="DsrEFH-like"/>
    <property type="match status" value="1"/>
</dbReference>
<keyword id="KW-0963">Cytoplasm</keyword>
<keyword id="KW-1185">Reference proteome</keyword>
<keyword id="KW-0808">Transferase</keyword>
<keyword id="KW-0819">tRNA processing</keyword>
<protein>
    <recommendedName>
        <fullName evidence="1">Sulfurtransferase TusD</fullName>
        <ecNumber evidence="1">2.8.1.-</ecNumber>
    </recommendedName>
    <alternativeName>
        <fullName evidence="1">tRNA 2-thiouridine synthesizing protein D</fullName>
    </alternativeName>
</protein>